<gene>
    <name evidence="1" type="primary">murD</name>
    <name type="ordered locus">ECA3817</name>
</gene>
<evidence type="ECO:0000255" key="1">
    <source>
        <dbReference type="HAMAP-Rule" id="MF_00639"/>
    </source>
</evidence>
<reference key="1">
    <citation type="journal article" date="2004" name="Proc. Natl. Acad. Sci. U.S.A.">
        <title>Genome sequence of the enterobacterial phytopathogen Erwinia carotovora subsp. atroseptica and characterization of virulence factors.</title>
        <authorList>
            <person name="Bell K.S."/>
            <person name="Sebaihia M."/>
            <person name="Pritchard L."/>
            <person name="Holden M.T.G."/>
            <person name="Hyman L.J."/>
            <person name="Holeva M.C."/>
            <person name="Thomson N.R."/>
            <person name="Bentley S.D."/>
            <person name="Churcher L.J.C."/>
            <person name="Mungall K."/>
            <person name="Atkin R."/>
            <person name="Bason N."/>
            <person name="Brooks K."/>
            <person name="Chillingworth T."/>
            <person name="Clark K."/>
            <person name="Doggett J."/>
            <person name="Fraser A."/>
            <person name="Hance Z."/>
            <person name="Hauser H."/>
            <person name="Jagels K."/>
            <person name="Moule S."/>
            <person name="Norbertczak H."/>
            <person name="Ormond D."/>
            <person name="Price C."/>
            <person name="Quail M.A."/>
            <person name="Sanders M."/>
            <person name="Walker D."/>
            <person name="Whitehead S."/>
            <person name="Salmond G.P.C."/>
            <person name="Birch P.R.J."/>
            <person name="Parkhill J."/>
            <person name="Toth I.K."/>
        </authorList>
    </citation>
    <scope>NUCLEOTIDE SEQUENCE [LARGE SCALE GENOMIC DNA]</scope>
    <source>
        <strain>SCRI 1043 / ATCC BAA-672</strain>
    </source>
</reference>
<feature type="chain" id="PRO_0000109012" description="UDP-N-acetylmuramoylalanine--D-glutamate ligase">
    <location>
        <begin position="1"/>
        <end position="438"/>
    </location>
</feature>
<feature type="binding site" evidence="1">
    <location>
        <begin position="112"/>
        <end position="118"/>
    </location>
    <ligand>
        <name>ATP</name>
        <dbReference type="ChEBI" id="CHEBI:30616"/>
    </ligand>
</feature>
<accession>Q6D0I1</accession>
<keyword id="KW-0067">ATP-binding</keyword>
<keyword id="KW-0131">Cell cycle</keyword>
<keyword id="KW-0132">Cell division</keyword>
<keyword id="KW-0133">Cell shape</keyword>
<keyword id="KW-0961">Cell wall biogenesis/degradation</keyword>
<keyword id="KW-0963">Cytoplasm</keyword>
<keyword id="KW-0436">Ligase</keyword>
<keyword id="KW-0547">Nucleotide-binding</keyword>
<keyword id="KW-0573">Peptidoglycan synthesis</keyword>
<keyword id="KW-1185">Reference proteome</keyword>
<name>MURD_PECAS</name>
<organism>
    <name type="scientific">Pectobacterium atrosepticum (strain SCRI 1043 / ATCC BAA-672)</name>
    <name type="common">Erwinia carotovora subsp. atroseptica</name>
    <dbReference type="NCBI Taxonomy" id="218491"/>
    <lineage>
        <taxon>Bacteria</taxon>
        <taxon>Pseudomonadati</taxon>
        <taxon>Pseudomonadota</taxon>
        <taxon>Gammaproteobacteria</taxon>
        <taxon>Enterobacterales</taxon>
        <taxon>Pectobacteriaceae</taxon>
        <taxon>Pectobacterium</taxon>
    </lineage>
</organism>
<proteinExistence type="inferred from homology"/>
<protein>
    <recommendedName>
        <fullName evidence="1">UDP-N-acetylmuramoylalanine--D-glutamate ligase</fullName>
        <ecNumber evidence="1">6.3.2.9</ecNumber>
    </recommendedName>
    <alternativeName>
        <fullName evidence="1">D-glutamic acid-adding enzyme</fullName>
    </alternativeName>
    <alternativeName>
        <fullName evidence="1">UDP-N-acetylmuramoyl-L-alanyl-D-glutamate synthetase</fullName>
    </alternativeName>
</protein>
<dbReference type="EC" id="6.3.2.9" evidence="1"/>
<dbReference type="EMBL" id="BX950851">
    <property type="protein sequence ID" value="CAG76716.1"/>
    <property type="molecule type" value="Genomic_DNA"/>
</dbReference>
<dbReference type="RefSeq" id="WP_011095317.1">
    <property type="nucleotide sequence ID" value="NC_004547.2"/>
</dbReference>
<dbReference type="SMR" id="Q6D0I1"/>
<dbReference type="STRING" id="218491.ECA3817"/>
<dbReference type="GeneID" id="57210436"/>
<dbReference type="KEGG" id="eca:ECA3817"/>
<dbReference type="PATRIC" id="fig|218491.5.peg.3872"/>
<dbReference type="eggNOG" id="COG0771">
    <property type="taxonomic scope" value="Bacteria"/>
</dbReference>
<dbReference type="HOGENOM" id="CLU_032540_1_0_6"/>
<dbReference type="OrthoDB" id="9809796at2"/>
<dbReference type="UniPathway" id="UPA00219"/>
<dbReference type="Proteomes" id="UP000007966">
    <property type="component" value="Chromosome"/>
</dbReference>
<dbReference type="GO" id="GO:0005737">
    <property type="term" value="C:cytoplasm"/>
    <property type="evidence" value="ECO:0007669"/>
    <property type="project" value="UniProtKB-SubCell"/>
</dbReference>
<dbReference type="GO" id="GO:0005524">
    <property type="term" value="F:ATP binding"/>
    <property type="evidence" value="ECO:0007669"/>
    <property type="project" value="UniProtKB-UniRule"/>
</dbReference>
<dbReference type="GO" id="GO:0008764">
    <property type="term" value="F:UDP-N-acetylmuramoylalanine-D-glutamate ligase activity"/>
    <property type="evidence" value="ECO:0007669"/>
    <property type="project" value="UniProtKB-UniRule"/>
</dbReference>
<dbReference type="GO" id="GO:0051301">
    <property type="term" value="P:cell division"/>
    <property type="evidence" value="ECO:0007669"/>
    <property type="project" value="UniProtKB-KW"/>
</dbReference>
<dbReference type="GO" id="GO:0071555">
    <property type="term" value="P:cell wall organization"/>
    <property type="evidence" value="ECO:0007669"/>
    <property type="project" value="UniProtKB-KW"/>
</dbReference>
<dbReference type="GO" id="GO:0009252">
    <property type="term" value="P:peptidoglycan biosynthetic process"/>
    <property type="evidence" value="ECO:0007669"/>
    <property type="project" value="UniProtKB-UniRule"/>
</dbReference>
<dbReference type="GO" id="GO:0008360">
    <property type="term" value="P:regulation of cell shape"/>
    <property type="evidence" value="ECO:0007669"/>
    <property type="project" value="UniProtKB-KW"/>
</dbReference>
<dbReference type="FunFam" id="3.40.1190.10:FF:000002">
    <property type="entry name" value="UDP-N-acetylmuramoylalanine--D-glutamate ligase"/>
    <property type="match status" value="1"/>
</dbReference>
<dbReference type="FunFam" id="3.90.190.20:FF:000003">
    <property type="entry name" value="UDP-N-acetylmuramoylalanine--D-glutamate ligase"/>
    <property type="match status" value="1"/>
</dbReference>
<dbReference type="Gene3D" id="3.90.190.20">
    <property type="entry name" value="Mur ligase, C-terminal domain"/>
    <property type="match status" value="1"/>
</dbReference>
<dbReference type="Gene3D" id="3.40.1190.10">
    <property type="entry name" value="Mur-like, catalytic domain"/>
    <property type="match status" value="1"/>
</dbReference>
<dbReference type="Gene3D" id="3.40.50.720">
    <property type="entry name" value="NAD(P)-binding Rossmann-like Domain"/>
    <property type="match status" value="1"/>
</dbReference>
<dbReference type="HAMAP" id="MF_00639">
    <property type="entry name" value="MurD"/>
    <property type="match status" value="1"/>
</dbReference>
<dbReference type="InterPro" id="IPR036565">
    <property type="entry name" value="Mur-like_cat_sf"/>
</dbReference>
<dbReference type="InterPro" id="IPR004101">
    <property type="entry name" value="Mur_ligase_C"/>
</dbReference>
<dbReference type="InterPro" id="IPR036615">
    <property type="entry name" value="Mur_ligase_C_dom_sf"/>
</dbReference>
<dbReference type="InterPro" id="IPR013221">
    <property type="entry name" value="Mur_ligase_cen"/>
</dbReference>
<dbReference type="InterPro" id="IPR005762">
    <property type="entry name" value="MurD"/>
</dbReference>
<dbReference type="NCBIfam" id="TIGR01087">
    <property type="entry name" value="murD"/>
    <property type="match status" value="1"/>
</dbReference>
<dbReference type="PANTHER" id="PTHR43692">
    <property type="entry name" value="UDP-N-ACETYLMURAMOYLALANINE--D-GLUTAMATE LIGASE"/>
    <property type="match status" value="1"/>
</dbReference>
<dbReference type="PANTHER" id="PTHR43692:SF1">
    <property type="entry name" value="UDP-N-ACETYLMURAMOYLALANINE--D-GLUTAMATE LIGASE"/>
    <property type="match status" value="1"/>
</dbReference>
<dbReference type="Pfam" id="PF02875">
    <property type="entry name" value="Mur_ligase_C"/>
    <property type="match status" value="1"/>
</dbReference>
<dbReference type="Pfam" id="PF08245">
    <property type="entry name" value="Mur_ligase_M"/>
    <property type="match status" value="1"/>
</dbReference>
<dbReference type="Pfam" id="PF21799">
    <property type="entry name" value="MurD-like_N"/>
    <property type="match status" value="1"/>
</dbReference>
<dbReference type="SUPFAM" id="SSF51984">
    <property type="entry name" value="MurCD N-terminal domain"/>
    <property type="match status" value="1"/>
</dbReference>
<dbReference type="SUPFAM" id="SSF53623">
    <property type="entry name" value="MurD-like peptide ligases, catalytic domain"/>
    <property type="match status" value="1"/>
</dbReference>
<dbReference type="SUPFAM" id="SSF53244">
    <property type="entry name" value="MurD-like peptide ligases, peptide-binding domain"/>
    <property type="match status" value="1"/>
</dbReference>
<comment type="function">
    <text evidence="1">Cell wall formation. Catalyzes the addition of glutamate to the nucleotide precursor UDP-N-acetylmuramoyl-L-alanine (UMA).</text>
</comment>
<comment type="catalytic activity">
    <reaction evidence="1">
        <text>UDP-N-acetyl-alpha-D-muramoyl-L-alanine + D-glutamate + ATP = UDP-N-acetyl-alpha-D-muramoyl-L-alanyl-D-glutamate + ADP + phosphate + H(+)</text>
        <dbReference type="Rhea" id="RHEA:16429"/>
        <dbReference type="ChEBI" id="CHEBI:15378"/>
        <dbReference type="ChEBI" id="CHEBI:29986"/>
        <dbReference type="ChEBI" id="CHEBI:30616"/>
        <dbReference type="ChEBI" id="CHEBI:43474"/>
        <dbReference type="ChEBI" id="CHEBI:83898"/>
        <dbReference type="ChEBI" id="CHEBI:83900"/>
        <dbReference type="ChEBI" id="CHEBI:456216"/>
        <dbReference type="EC" id="6.3.2.9"/>
    </reaction>
</comment>
<comment type="pathway">
    <text evidence="1">Cell wall biogenesis; peptidoglycan biosynthesis.</text>
</comment>
<comment type="subcellular location">
    <subcellularLocation>
        <location evidence="1">Cytoplasm</location>
    </subcellularLocation>
</comment>
<comment type="similarity">
    <text evidence="1">Belongs to the MurCDEF family.</text>
</comment>
<sequence>MVDYQGKKVVIIGLGLTGLSCVDFFLARGVVPRVVDTRISPPGLDKLPEQVERHLGSLNEDWLMSADLIVASPGVALATPILCDAADAGIEIVGDIELFCREAQAPIVAITGSNGKSTVTTLVGEMARAAGWQVGVGGNIGLPALQLLEHPAQLYVLELSSFQLETTTSLHAAAATILNVTEDHTNRYPFGLQQYRAAKLHIYEHADLCVVNADDALTMPVRGADARCRSFGVDVGDYHLNRQQGETWLRVDGERVLNTREIKLVGQHNYTNALAALALADAVKIPRASALTALTSFTGLPHRFQMAFERNGVRWINDSKATNVGSTEAALSGLAVDGTLHLLLGGDGKSADFSPLVPYLQGERIRLYCFGRDGQQLAALRPEIAEQTETMEQAMRVIAERIRPGDMVLLSPACASLDQFRSFEQRGDEFARLAEELG</sequence>